<reference key="1">
    <citation type="journal article" date="2000" name="DNA Res.">
        <title>Structural analysis of Arabidopsis thaliana chromosome 3. II. Sequence features of the 4,251,695 bp regions covered by 90 P1, TAC and BAC clones.</title>
        <authorList>
            <person name="Kaneko T."/>
            <person name="Katoh T."/>
            <person name="Sato S."/>
            <person name="Nakamura Y."/>
            <person name="Asamizu E."/>
            <person name="Tabata S."/>
        </authorList>
    </citation>
    <scope>NUCLEOTIDE SEQUENCE [LARGE SCALE GENOMIC DNA]</scope>
    <source>
        <strain>cv. Columbia</strain>
    </source>
</reference>
<reference key="2">
    <citation type="journal article" date="2017" name="Plant J.">
        <title>Araport11: a complete reannotation of the Arabidopsis thaliana reference genome.</title>
        <authorList>
            <person name="Cheng C.Y."/>
            <person name="Krishnakumar V."/>
            <person name="Chan A.P."/>
            <person name="Thibaud-Nissen F."/>
            <person name="Schobel S."/>
            <person name="Town C.D."/>
        </authorList>
    </citation>
    <scope>GENOME REANNOTATION</scope>
    <source>
        <strain>cv. Columbia</strain>
    </source>
</reference>
<reference key="3">
    <citation type="journal article" date="2003" name="Science">
        <title>Empirical analysis of transcriptional activity in the Arabidopsis genome.</title>
        <authorList>
            <person name="Yamada K."/>
            <person name="Lim J."/>
            <person name="Dale J.M."/>
            <person name="Chen H."/>
            <person name="Shinn P."/>
            <person name="Palm C.J."/>
            <person name="Southwick A.M."/>
            <person name="Wu H.C."/>
            <person name="Kim C.J."/>
            <person name="Nguyen M."/>
            <person name="Pham P.K."/>
            <person name="Cheuk R.F."/>
            <person name="Karlin-Newmann G."/>
            <person name="Liu S.X."/>
            <person name="Lam B."/>
            <person name="Sakano H."/>
            <person name="Wu T."/>
            <person name="Yu G."/>
            <person name="Miranda M."/>
            <person name="Quach H.L."/>
            <person name="Tripp M."/>
            <person name="Chang C.H."/>
            <person name="Lee J.M."/>
            <person name="Toriumi M.J."/>
            <person name="Chan M.M."/>
            <person name="Tang C.C."/>
            <person name="Onodera C.S."/>
            <person name="Deng J.M."/>
            <person name="Akiyama K."/>
            <person name="Ansari Y."/>
            <person name="Arakawa T."/>
            <person name="Banh J."/>
            <person name="Banno F."/>
            <person name="Bowser L."/>
            <person name="Brooks S.Y."/>
            <person name="Carninci P."/>
            <person name="Chao Q."/>
            <person name="Choy N."/>
            <person name="Enju A."/>
            <person name="Goldsmith A.D."/>
            <person name="Gurjal M."/>
            <person name="Hansen N.F."/>
            <person name="Hayashizaki Y."/>
            <person name="Johnson-Hopson C."/>
            <person name="Hsuan V.W."/>
            <person name="Iida K."/>
            <person name="Karnes M."/>
            <person name="Khan S."/>
            <person name="Koesema E."/>
            <person name="Ishida J."/>
            <person name="Jiang P.X."/>
            <person name="Jones T."/>
            <person name="Kawai J."/>
            <person name="Kamiya A."/>
            <person name="Meyers C."/>
            <person name="Nakajima M."/>
            <person name="Narusaka M."/>
            <person name="Seki M."/>
            <person name="Sakurai T."/>
            <person name="Satou M."/>
            <person name="Tamse R."/>
            <person name="Vaysberg M."/>
            <person name="Wallender E.K."/>
            <person name="Wong C."/>
            <person name="Yamamura Y."/>
            <person name="Yuan S."/>
            <person name="Shinozaki K."/>
            <person name="Davis R.W."/>
            <person name="Theologis A."/>
            <person name="Ecker J.R."/>
        </authorList>
    </citation>
    <scope>NUCLEOTIDE SEQUENCE [LARGE SCALE MRNA]</scope>
    <source>
        <strain>cv. Columbia</strain>
    </source>
</reference>
<reference key="4">
    <citation type="submission" date="2002-03" db="EMBL/GenBank/DDBJ databases">
        <title>Full-length cDNA from Arabidopsis thaliana.</title>
        <authorList>
            <person name="Brover V.V."/>
            <person name="Troukhan M.E."/>
            <person name="Alexandrov N.A."/>
            <person name="Lu Y.-P."/>
            <person name="Flavell R.B."/>
            <person name="Feldmann K.A."/>
        </authorList>
    </citation>
    <scope>NUCLEOTIDE SEQUENCE [LARGE SCALE MRNA]</scope>
</reference>
<reference key="5">
    <citation type="journal article" date="2013" name="Proc. Natl. Acad. Sci. U.S.A.">
        <title>An RNA recognition motif-containing protein is required for plastid RNA editing in Arabidopsis and maize.</title>
        <authorList>
            <person name="Sun T."/>
            <person name="Germain A."/>
            <person name="Giloteaux L."/>
            <person name="Hammani K."/>
            <person name="Barkan A."/>
            <person name="Hanson M.R."/>
            <person name="Bentolila S."/>
        </authorList>
    </citation>
    <scope>FUNCTION</scope>
    <scope>INTERACTION WITH PCMP-H51/CRR28 AND PCMP-H12/OTP82</scope>
    <scope>DISRUPTION PHENOTYPE</scope>
</reference>
<reference key="6">
    <citation type="journal article" date="2015" name="PLoS Genet.">
        <title>A zinc finger motif-containing protein is essential for chloroplast RNA editing.</title>
        <authorList>
            <person name="Sun T."/>
            <person name="Shi X."/>
            <person name="Friso G."/>
            <person name="Van Wijk K."/>
            <person name="Bentolila S."/>
            <person name="Hanson M.R."/>
        </authorList>
    </citation>
    <scope>INTERACTION WITH MORF8/RIP1; MORF2/RIP2 AND VAR3/OZ1</scope>
</reference>
<name>ORRM1_ARATH</name>
<sequence>MEALIASTSFFVPISNSSSSHIINNRFFPSFYSPNLNFGTFRKTSLSSSHLVFSSSAISAPPSSTVLTRNSYWMVLLDKPPHWVSSKSAMVDYYVEILAKVLGNEKDAQVSIYDASFDTHFGFCCHIDEDASRQLASLPGVVSIRPEQDYSSEKKNYGIGSHKGVSLFDHGTVKHWMVRIDKPGVGIVTKAQMVDHCVQLLSKVLWNEKDAQMCLYHVSWQSDFGFCCDLDERSAVELAGVPGVLAVVPDNSFESLNKDYEGDSTQDSRDQDDSESPPVKTKKLFITGLSFYTSEKTLRAAFEGFGELVEVKIIMDKISKRSKGYAFLEYTTEEAAGTALKEMNGKIINGWMIVVDVAKTKPFRQNRSQPSFGL</sequence>
<protein>
    <recommendedName>
        <fullName evidence="6">Organelle RRM domain-containing protein 1, chloroplastic</fullName>
    </recommendedName>
</protein>
<comment type="function">
    <text evidence="4">Involved in C-to-U editing of chloroplastic RNA. Functions as major chloroplastic editing factor. Controls 62 percent of the chloroplastic editing sites. Binds RNA close to ORRM1-dependent editing sites in vitro. Binds the editing recognition trans-factors PCMP-H51/CRR28 and PCMP-H12/OTP82.</text>
</comment>
<comment type="subunit">
    <text evidence="4 5">Interacts with PCMP-H51/CRR28 and PCMP-H12/OTP82 (PubMed:23487777). Interacts with MORF8/RIP1, MORF2/RIP2 and VAR3/OZ1 (PubMed:25768119).</text>
</comment>
<comment type="subcellular location">
    <subcellularLocation>
        <location evidence="1">Plastid</location>
        <location evidence="1">Chloroplast</location>
    </subcellularLocation>
</comment>
<comment type="disruption phenotype">
    <text evidence="4">No visible phenotype under normal growth conditions, but mutant plants exhibit severe editing defects in chloroplastic transcripts.</text>
</comment>
<comment type="sequence caution" evidence="7">
    <conflict type="erroneous gene model prediction">
        <sequence resource="EMBL-CDS" id="BAB01902"/>
    </conflict>
</comment>
<feature type="transit peptide" description="Chloroplast" evidence="1">
    <location>
        <begin position="1"/>
        <end position="54"/>
    </location>
</feature>
<feature type="chain" id="PRO_0000439868" description="Organelle RRM domain-containing protein 1, chloroplastic">
    <location>
        <begin position="55"/>
        <end position="374"/>
    </location>
</feature>
<feature type="domain" description="RRM" evidence="2">
    <location>
        <begin position="282"/>
        <end position="360"/>
    </location>
</feature>
<feature type="region of interest" description="Disordered" evidence="3">
    <location>
        <begin position="258"/>
        <end position="279"/>
    </location>
</feature>
<feature type="compositionally biased region" description="Basic and acidic residues" evidence="3">
    <location>
        <begin position="258"/>
        <end position="271"/>
    </location>
</feature>
<keyword id="KW-0150">Chloroplast</keyword>
<keyword id="KW-0507">mRNA processing</keyword>
<keyword id="KW-0934">Plastid</keyword>
<keyword id="KW-1185">Reference proteome</keyword>
<keyword id="KW-0694">RNA-binding</keyword>
<keyword id="KW-0809">Transit peptide</keyword>
<gene>
    <name evidence="6" type="primary">ORRM1</name>
    <name evidence="8" type="ordered locus">At3g20930</name>
    <name evidence="9" type="ORF">MFD22.4</name>
</gene>
<dbReference type="EMBL" id="AP001304">
    <property type="protein sequence ID" value="BAB01902.1"/>
    <property type="status" value="ALT_SEQ"/>
    <property type="molecule type" value="Genomic_DNA"/>
</dbReference>
<dbReference type="EMBL" id="CP002686">
    <property type="protein sequence ID" value="AEE76442.1"/>
    <property type="molecule type" value="Genomic_DNA"/>
</dbReference>
<dbReference type="EMBL" id="AY099828">
    <property type="protein sequence ID" value="AAM20679.1"/>
    <property type="molecule type" value="mRNA"/>
</dbReference>
<dbReference type="EMBL" id="BT002195">
    <property type="protein sequence ID" value="AAN72206.1"/>
    <property type="molecule type" value="mRNA"/>
</dbReference>
<dbReference type="EMBL" id="AY084565">
    <property type="protein sequence ID" value="AAM61131.1"/>
    <property type="molecule type" value="mRNA"/>
</dbReference>
<dbReference type="RefSeq" id="NP_566672.1">
    <property type="nucleotide sequence ID" value="NM_112985.5"/>
</dbReference>
<dbReference type="SMR" id="Q8L440"/>
<dbReference type="FunCoup" id="Q8L440">
    <property type="interactions" value="2292"/>
</dbReference>
<dbReference type="STRING" id="3702.Q8L440"/>
<dbReference type="PaxDb" id="3702-AT3G20930.1"/>
<dbReference type="ProteomicsDB" id="248825"/>
<dbReference type="EnsemblPlants" id="AT3G20930.1">
    <property type="protein sequence ID" value="AT3G20930.1"/>
    <property type="gene ID" value="AT3G20930"/>
</dbReference>
<dbReference type="GeneID" id="821642"/>
<dbReference type="Gramene" id="AT3G20930.1">
    <property type="protein sequence ID" value="AT3G20930.1"/>
    <property type="gene ID" value="AT3G20930"/>
</dbReference>
<dbReference type="KEGG" id="ath:AT3G20930"/>
<dbReference type="Araport" id="AT3G20930"/>
<dbReference type="TAIR" id="AT3G20930">
    <property type="gene designation" value="ORRM1"/>
</dbReference>
<dbReference type="eggNOG" id="KOG0118">
    <property type="taxonomic scope" value="Eukaryota"/>
</dbReference>
<dbReference type="HOGENOM" id="CLU_056098_0_0_1"/>
<dbReference type="InParanoid" id="Q8L440"/>
<dbReference type="OMA" id="IYHISWQ"/>
<dbReference type="OrthoDB" id="4207594at2759"/>
<dbReference type="PhylomeDB" id="Q8L440"/>
<dbReference type="PRO" id="PR:Q8L440"/>
<dbReference type="Proteomes" id="UP000006548">
    <property type="component" value="Chromosome 3"/>
</dbReference>
<dbReference type="ExpressionAtlas" id="Q8L440">
    <property type="expression patterns" value="baseline and differential"/>
</dbReference>
<dbReference type="GO" id="GO:0009507">
    <property type="term" value="C:chloroplast"/>
    <property type="evidence" value="ECO:0007669"/>
    <property type="project" value="UniProtKB-SubCell"/>
</dbReference>
<dbReference type="GO" id="GO:0003729">
    <property type="term" value="F:mRNA binding"/>
    <property type="evidence" value="ECO:0000314"/>
    <property type="project" value="TAIR"/>
</dbReference>
<dbReference type="GO" id="GO:0003723">
    <property type="term" value="F:RNA binding"/>
    <property type="evidence" value="ECO:0000314"/>
    <property type="project" value="TAIR"/>
</dbReference>
<dbReference type="GO" id="GO:1900871">
    <property type="term" value="P:chloroplast mRNA modification"/>
    <property type="evidence" value="ECO:0000315"/>
    <property type="project" value="TAIR"/>
</dbReference>
<dbReference type="GO" id="GO:0016554">
    <property type="term" value="P:cytidine to uridine editing"/>
    <property type="evidence" value="ECO:0007669"/>
    <property type="project" value="InterPro"/>
</dbReference>
<dbReference type="GO" id="GO:0006397">
    <property type="term" value="P:mRNA processing"/>
    <property type="evidence" value="ECO:0007669"/>
    <property type="project" value="UniProtKB-KW"/>
</dbReference>
<dbReference type="GO" id="GO:0009409">
    <property type="term" value="P:response to cold"/>
    <property type="evidence" value="ECO:0000315"/>
    <property type="project" value="TAIR"/>
</dbReference>
<dbReference type="FunFam" id="3.30.70.330:FF:000474">
    <property type="entry name" value="Organelle RRM domain-containing protein 1, chloroplastic"/>
    <property type="match status" value="1"/>
</dbReference>
<dbReference type="Gene3D" id="3.30.70.330">
    <property type="match status" value="1"/>
</dbReference>
<dbReference type="Gene3D" id="3.30.70.80">
    <property type="entry name" value="Peptidase S8 propeptide/proteinase inhibitor I9"/>
    <property type="match status" value="2"/>
</dbReference>
<dbReference type="InterPro" id="IPR039206">
    <property type="entry name" value="MORF/ORRM1/DAG-like"/>
</dbReference>
<dbReference type="InterPro" id="IPR054059">
    <property type="entry name" value="MORF/ORRM1/DAG-like_MORF"/>
</dbReference>
<dbReference type="InterPro" id="IPR012677">
    <property type="entry name" value="Nucleotide-bd_a/b_plait_sf"/>
</dbReference>
<dbReference type="InterPro" id="IPR035979">
    <property type="entry name" value="RBD_domain_sf"/>
</dbReference>
<dbReference type="InterPro" id="IPR000504">
    <property type="entry name" value="RRM_dom"/>
</dbReference>
<dbReference type="InterPro" id="IPR037045">
    <property type="entry name" value="S8pro/Inhibitor_I9_sf"/>
</dbReference>
<dbReference type="PANTHER" id="PTHR31346">
    <property type="entry name" value="MULTIPLE ORGANELLAR RNA EDITING FACTOR 2, CHLOROPLASTIC-RELATED-RELATED"/>
    <property type="match status" value="1"/>
</dbReference>
<dbReference type="PANTHER" id="PTHR31346:SF11">
    <property type="entry name" value="ORGANELLE RRM DOMAIN-CONTAINING PROTEIN 1, CHLOROPLASTIC"/>
    <property type="match status" value="1"/>
</dbReference>
<dbReference type="Pfam" id="PF21864">
    <property type="entry name" value="MORF_dom"/>
    <property type="match status" value="2"/>
</dbReference>
<dbReference type="Pfam" id="PF00076">
    <property type="entry name" value="RRM_1"/>
    <property type="match status" value="1"/>
</dbReference>
<dbReference type="SMART" id="SM00360">
    <property type="entry name" value="RRM"/>
    <property type="match status" value="1"/>
</dbReference>
<dbReference type="SUPFAM" id="SSF54928">
    <property type="entry name" value="RNA-binding domain, RBD"/>
    <property type="match status" value="1"/>
</dbReference>
<dbReference type="PROSITE" id="PS50102">
    <property type="entry name" value="RRM"/>
    <property type="match status" value="1"/>
</dbReference>
<organism>
    <name type="scientific">Arabidopsis thaliana</name>
    <name type="common">Mouse-ear cress</name>
    <dbReference type="NCBI Taxonomy" id="3702"/>
    <lineage>
        <taxon>Eukaryota</taxon>
        <taxon>Viridiplantae</taxon>
        <taxon>Streptophyta</taxon>
        <taxon>Embryophyta</taxon>
        <taxon>Tracheophyta</taxon>
        <taxon>Spermatophyta</taxon>
        <taxon>Magnoliopsida</taxon>
        <taxon>eudicotyledons</taxon>
        <taxon>Gunneridae</taxon>
        <taxon>Pentapetalae</taxon>
        <taxon>rosids</taxon>
        <taxon>malvids</taxon>
        <taxon>Brassicales</taxon>
        <taxon>Brassicaceae</taxon>
        <taxon>Camelineae</taxon>
        <taxon>Arabidopsis</taxon>
    </lineage>
</organism>
<proteinExistence type="evidence at protein level"/>
<evidence type="ECO:0000255" key="1"/>
<evidence type="ECO:0000255" key="2">
    <source>
        <dbReference type="PROSITE-ProRule" id="PRU00176"/>
    </source>
</evidence>
<evidence type="ECO:0000256" key="3">
    <source>
        <dbReference type="SAM" id="MobiDB-lite"/>
    </source>
</evidence>
<evidence type="ECO:0000269" key="4">
    <source>
    </source>
</evidence>
<evidence type="ECO:0000269" key="5">
    <source>
    </source>
</evidence>
<evidence type="ECO:0000303" key="6">
    <source>
    </source>
</evidence>
<evidence type="ECO:0000305" key="7"/>
<evidence type="ECO:0000312" key="8">
    <source>
        <dbReference type="Araport" id="AT3G20930"/>
    </source>
</evidence>
<evidence type="ECO:0000312" key="9">
    <source>
        <dbReference type="EMBL" id="BAB01902.1"/>
    </source>
</evidence>
<accession>Q8L440</accession>
<accession>Q9LIH1</accession>